<reference key="1">
    <citation type="journal article" date="2002" name="Proc. Natl. Acad. Sci. U.S.A.">
        <title>The Brucella suis genome reveals fundamental similarities between animal and plant pathogens and symbionts.</title>
        <authorList>
            <person name="Paulsen I.T."/>
            <person name="Seshadri R."/>
            <person name="Nelson K.E."/>
            <person name="Eisen J.A."/>
            <person name="Heidelberg J.F."/>
            <person name="Read T.D."/>
            <person name="Dodson R.J."/>
            <person name="Umayam L.A."/>
            <person name="Brinkac L.M."/>
            <person name="Beanan M.J."/>
            <person name="Daugherty S.C."/>
            <person name="DeBoy R.T."/>
            <person name="Durkin A.S."/>
            <person name="Kolonay J.F."/>
            <person name="Madupu R."/>
            <person name="Nelson W.C."/>
            <person name="Ayodeji B."/>
            <person name="Kraul M."/>
            <person name="Shetty J."/>
            <person name="Malek J.A."/>
            <person name="Van Aken S.E."/>
            <person name="Riedmuller S."/>
            <person name="Tettelin H."/>
            <person name="Gill S.R."/>
            <person name="White O."/>
            <person name="Salzberg S.L."/>
            <person name="Hoover D.L."/>
            <person name="Lindler L.E."/>
            <person name="Halling S.M."/>
            <person name="Boyle S.M."/>
            <person name="Fraser C.M."/>
        </authorList>
    </citation>
    <scope>NUCLEOTIDE SEQUENCE [LARGE SCALE GENOMIC DNA]</scope>
    <source>
        <strain>1330</strain>
    </source>
</reference>
<reference key="2">
    <citation type="journal article" date="2011" name="J. Bacteriol.">
        <title>Revised genome sequence of Brucella suis 1330.</title>
        <authorList>
            <person name="Tae H."/>
            <person name="Shallom S."/>
            <person name="Settlage R."/>
            <person name="Preston D."/>
            <person name="Adams L.G."/>
            <person name="Garner H.R."/>
        </authorList>
    </citation>
    <scope>NUCLEOTIDE SEQUENCE [LARGE SCALE GENOMIC DNA]</scope>
    <source>
        <strain>1330</strain>
    </source>
</reference>
<keyword id="KW-0963">Cytoplasm</keyword>
<keyword id="KW-0378">Hydrolase</keyword>
<keyword id="KW-0546">Nucleotide metabolism</keyword>
<comment type="function">
    <text evidence="1">Nucleoside triphosphate pyrophosphatase that hydrolyzes 7-methyl-GTP (m(7)GTP). May have a dual role in cell division arrest and in preventing the incorporation of modified nucleotides into cellular nucleic acids.</text>
</comment>
<comment type="catalytic activity">
    <reaction evidence="1">
        <text>N(7)-methyl-GTP + H2O = N(7)-methyl-GMP + diphosphate + H(+)</text>
        <dbReference type="Rhea" id="RHEA:58744"/>
        <dbReference type="ChEBI" id="CHEBI:15377"/>
        <dbReference type="ChEBI" id="CHEBI:15378"/>
        <dbReference type="ChEBI" id="CHEBI:33019"/>
        <dbReference type="ChEBI" id="CHEBI:58285"/>
        <dbReference type="ChEBI" id="CHEBI:87133"/>
    </reaction>
</comment>
<comment type="cofactor">
    <cofactor evidence="1">
        <name>a divalent metal cation</name>
        <dbReference type="ChEBI" id="CHEBI:60240"/>
    </cofactor>
</comment>
<comment type="subcellular location">
    <subcellularLocation>
        <location evidence="1">Cytoplasm</location>
    </subcellularLocation>
</comment>
<comment type="similarity">
    <text evidence="1">Belongs to the Maf family. YceF subfamily.</text>
</comment>
<organism>
    <name type="scientific">Brucella suis biovar 1 (strain 1330)</name>
    <dbReference type="NCBI Taxonomy" id="204722"/>
    <lineage>
        <taxon>Bacteria</taxon>
        <taxon>Pseudomonadati</taxon>
        <taxon>Pseudomonadota</taxon>
        <taxon>Alphaproteobacteria</taxon>
        <taxon>Hyphomicrobiales</taxon>
        <taxon>Brucellaceae</taxon>
        <taxon>Brucella/Ochrobactrum group</taxon>
        <taxon>Brucella</taxon>
    </lineage>
</organism>
<gene>
    <name type="primary">maf-2</name>
    <name type="synonym">maf</name>
    <name type="ordered locus">BR2068</name>
    <name type="ordered locus">BS1330_I2062</name>
</gene>
<feature type="chain" id="PRO_0000123002" description="7-methyl-GTP pyrophosphatase">
    <location>
        <begin position="1"/>
        <end position="199"/>
    </location>
</feature>
<feature type="active site" description="Proton acceptor" evidence="1">
    <location>
        <position position="76"/>
    </location>
</feature>
<feature type="site" description="Important for substrate specificity" evidence="1">
    <location>
        <position position="13"/>
    </location>
</feature>
<feature type="site" description="Important for substrate specificity" evidence="1">
    <location>
        <position position="77"/>
    </location>
</feature>
<feature type="site" description="Important for substrate specificity" evidence="1">
    <location>
        <position position="162"/>
    </location>
</feature>
<evidence type="ECO:0000255" key="1">
    <source>
        <dbReference type="HAMAP-Rule" id="MF_00528"/>
    </source>
</evidence>
<protein>
    <recommendedName>
        <fullName evidence="1">7-methyl-GTP pyrophosphatase</fullName>
        <shortName evidence="1">m(7)GTP pyrophosphatase</shortName>
        <ecNumber evidence="1">3.6.1.-</ecNumber>
    </recommendedName>
</protein>
<sequence length="199" mass="21561">MTVKLVLASKSPFRSALLKNAGIEFSTASADIDERAVEAPLYESGATPEDVAQILAEAKAIDVSEKNPGAVVIGCDQTLSLGDEIFHKPHDMEAARRQLQKFSGKTHQLNSAVVLARDGKTLWRHVSIAHMTMRDLDAGFIGRYLGRVGDIALSSVGAYQVEGPGIQLFEKIDGDYFTIVGLPLLPLLAELRREKCIDG</sequence>
<proteinExistence type="inferred from homology"/>
<accession>Q8FY22</accession>
<accession>G0K916</accession>
<dbReference type="EC" id="3.6.1.-" evidence="1"/>
<dbReference type="EMBL" id="AE014291">
    <property type="protein sequence ID" value="AAN30958.1"/>
    <property type="molecule type" value="Genomic_DNA"/>
</dbReference>
<dbReference type="EMBL" id="CP002997">
    <property type="protein sequence ID" value="AEM19375.1"/>
    <property type="molecule type" value="Genomic_DNA"/>
</dbReference>
<dbReference type="RefSeq" id="WP_004687756.1">
    <property type="nucleotide sequence ID" value="NZ_KN046804.1"/>
</dbReference>
<dbReference type="SMR" id="Q8FY22"/>
<dbReference type="KEGG" id="bms:BR2068"/>
<dbReference type="KEGG" id="bsi:BS1330_I2062"/>
<dbReference type="PATRIC" id="fig|204722.21.peg.1275"/>
<dbReference type="HOGENOM" id="CLU_040416_1_1_5"/>
<dbReference type="PhylomeDB" id="Q8FY22"/>
<dbReference type="Proteomes" id="UP000007104">
    <property type="component" value="Chromosome I"/>
</dbReference>
<dbReference type="GO" id="GO:0005737">
    <property type="term" value="C:cytoplasm"/>
    <property type="evidence" value="ECO:0007669"/>
    <property type="project" value="UniProtKB-SubCell"/>
</dbReference>
<dbReference type="GO" id="GO:0047429">
    <property type="term" value="F:nucleoside triphosphate diphosphatase activity"/>
    <property type="evidence" value="ECO:0007669"/>
    <property type="project" value="InterPro"/>
</dbReference>
<dbReference type="GO" id="GO:0009117">
    <property type="term" value="P:nucleotide metabolic process"/>
    <property type="evidence" value="ECO:0007669"/>
    <property type="project" value="UniProtKB-KW"/>
</dbReference>
<dbReference type="CDD" id="cd00555">
    <property type="entry name" value="Maf"/>
    <property type="match status" value="1"/>
</dbReference>
<dbReference type="Gene3D" id="3.90.950.10">
    <property type="match status" value="1"/>
</dbReference>
<dbReference type="HAMAP" id="MF_00528">
    <property type="entry name" value="Maf"/>
    <property type="match status" value="1"/>
</dbReference>
<dbReference type="InterPro" id="IPR029001">
    <property type="entry name" value="ITPase-like_fam"/>
</dbReference>
<dbReference type="InterPro" id="IPR003697">
    <property type="entry name" value="Maf-like"/>
</dbReference>
<dbReference type="NCBIfam" id="TIGR00172">
    <property type="entry name" value="maf"/>
    <property type="match status" value="1"/>
</dbReference>
<dbReference type="NCBIfam" id="NF002690">
    <property type="entry name" value="PRK02478.1"/>
    <property type="match status" value="1"/>
</dbReference>
<dbReference type="PANTHER" id="PTHR43213">
    <property type="entry name" value="BIFUNCTIONAL DTTP/UTP PYROPHOSPHATASE/METHYLTRANSFERASE PROTEIN-RELATED"/>
    <property type="match status" value="1"/>
</dbReference>
<dbReference type="PANTHER" id="PTHR43213:SF5">
    <property type="entry name" value="BIFUNCTIONAL DTTP_UTP PYROPHOSPHATASE_METHYLTRANSFERASE PROTEIN-RELATED"/>
    <property type="match status" value="1"/>
</dbReference>
<dbReference type="Pfam" id="PF02545">
    <property type="entry name" value="Maf"/>
    <property type="match status" value="1"/>
</dbReference>
<dbReference type="PIRSF" id="PIRSF006305">
    <property type="entry name" value="Maf"/>
    <property type="match status" value="1"/>
</dbReference>
<dbReference type="SUPFAM" id="SSF52972">
    <property type="entry name" value="ITPase-like"/>
    <property type="match status" value="1"/>
</dbReference>
<name>NTPPB_BRUSU</name>